<name>RL2_RICCK</name>
<evidence type="ECO:0000255" key="1">
    <source>
        <dbReference type="HAMAP-Rule" id="MF_01320"/>
    </source>
</evidence>
<evidence type="ECO:0000256" key="2">
    <source>
        <dbReference type="SAM" id="MobiDB-lite"/>
    </source>
</evidence>
<evidence type="ECO:0000305" key="3"/>
<sequence>MALKNFNPITPSLRALVQVDKTSVWKGRPFKSLTKGISKTGGRNNHGRITSWHRGGGHKKLYRIIDFKRNKIDISAVVERIEYDPNRTAFIALIKYEDGQYSYILAPQKLSVGDKVISSQDADIKIGNCLPLKFIPIGTTVHNVEMKVGKGGQIARSAGTSVDLVGKDSGYAQIKLRSGEFRLIPLDCKATIGSISNPDQKNINLGKAGRNRWLGWRPHVRGVAMNPVDHPHGGGEGKTSGGRHPVTPWGFPTKGKKTRKNKRTSKFIVKKRK</sequence>
<reference key="1">
    <citation type="submission" date="2007-09" db="EMBL/GenBank/DDBJ databases">
        <title>Complete genome sequence of Rickettsia canadensis.</title>
        <authorList>
            <person name="Madan A."/>
            <person name="Fahey J."/>
            <person name="Helton E."/>
            <person name="Ketteman M."/>
            <person name="Madan A."/>
            <person name="Rodrigues S."/>
            <person name="Sanchez A."/>
            <person name="Whiting M."/>
            <person name="Dasch G."/>
            <person name="Eremeeva M."/>
        </authorList>
    </citation>
    <scope>NUCLEOTIDE SEQUENCE [LARGE SCALE GENOMIC DNA]</scope>
    <source>
        <strain>McKiel</strain>
    </source>
</reference>
<feature type="chain" id="PRO_1000051947" description="Large ribosomal subunit protein uL2">
    <location>
        <begin position="1"/>
        <end position="273"/>
    </location>
</feature>
<feature type="region of interest" description="Disordered" evidence="2">
    <location>
        <begin position="228"/>
        <end position="273"/>
    </location>
</feature>
<feature type="compositionally biased region" description="Basic residues" evidence="2">
    <location>
        <begin position="254"/>
        <end position="273"/>
    </location>
</feature>
<proteinExistence type="inferred from homology"/>
<accession>A8EZL3</accession>
<dbReference type="EMBL" id="CP000409">
    <property type="protein sequence ID" value="ABV73796.1"/>
    <property type="molecule type" value="Genomic_DNA"/>
</dbReference>
<dbReference type="RefSeq" id="WP_012148991.1">
    <property type="nucleotide sequence ID" value="NC_009879.1"/>
</dbReference>
<dbReference type="SMR" id="A8EZL3"/>
<dbReference type="STRING" id="293613.A1E_04355"/>
<dbReference type="KEGG" id="rcm:A1E_04355"/>
<dbReference type="eggNOG" id="COG0090">
    <property type="taxonomic scope" value="Bacteria"/>
</dbReference>
<dbReference type="HOGENOM" id="CLU_036235_2_1_5"/>
<dbReference type="Proteomes" id="UP000007056">
    <property type="component" value="Chromosome"/>
</dbReference>
<dbReference type="GO" id="GO:0015934">
    <property type="term" value="C:large ribosomal subunit"/>
    <property type="evidence" value="ECO:0007669"/>
    <property type="project" value="InterPro"/>
</dbReference>
<dbReference type="GO" id="GO:0019843">
    <property type="term" value="F:rRNA binding"/>
    <property type="evidence" value="ECO:0007669"/>
    <property type="project" value="UniProtKB-UniRule"/>
</dbReference>
<dbReference type="GO" id="GO:0003735">
    <property type="term" value="F:structural constituent of ribosome"/>
    <property type="evidence" value="ECO:0007669"/>
    <property type="project" value="InterPro"/>
</dbReference>
<dbReference type="GO" id="GO:0016740">
    <property type="term" value="F:transferase activity"/>
    <property type="evidence" value="ECO:0007669"/>
    <property type="project" value="InterPro"/>
</dbReference>
<dbReference type="GO" id="GO:0006412">
    <property type="term" value="P:translation"/>
    <property type="evidence" value="ECO:0007669"/>
    <property type="project" value="UniProtKB-UniRule"/>
</dbReference>
<dbReference type="FunFam" id="2.30.30.30:FF:000001">
    <property type="entry name" value="50S ribosomal protein L2"/>
    <property type="match status" value="1"/>
</dbReference>
<dbReference type="FunFam" id="2.40.50.140:FF:000003">
    <property type="entry name" value="50S ribosomal protein L2"/>
    <property type="match status" value="1"/>
</dbReference>
<dbReference type="FunFam" id="4.10.950.10:FF:000001">
    <property type="entry name" value="50S ribosomal protein L2"/>
    <property type="match status" value="1"/>
</dbReference>
<dbReference type="Gene3D" id="2.30.30.30">
    <property type="match status" value="1"/>
</dbReference>
<dbReference type="Gene3D" id="2.40.50.140">
    <property type="entry name" value="Nucleic acid-binding proteins"/>
    <property type="match status" value="1"/>
</dbReference>
<dbReference type="Gene3D" id="4.10.950.10">
    <property type="entry name" value="Ribosomal protein L2, domain 3"/>
    <property type="match status" value="1"/>
</dbReference>
<dbReference type="HAMAP" id="MF_01320_B">
    <property type="entry name" value="Ribosomal_uL2_B"/>
    <property type="match status" value="1"/>
</dbReference>
<dbReference type="InterPro" id="IPR012340">
    <property type="entry name" value="NA-bd_OB-fold"/>
</dbReference>
<dbReference type="InterPro" id="IPR014722">
    <property type="entry name" value="Rib_uL2_dom2"/>
</dbReference>
<dbReference type="InterPro" id="IPR002171">
    <property type="entry name" value="Ribosomal_uL2"/>
</dbReference>
<dbReference type="InterPro" id="IPR005880">
    <property type="entry name" value="Ribosomal_uL2_bac/org-type"/>
</dbReference>
<dbReference type="InterPro" id="IPR022669">
    <property type="entry name" value="Ribosomal_uL2_C"/>
</dbReference>
<dbReference type="InterPro" id="IPR022671">
    <property type="entry name" value="Ribosomal_uL2_CS"/>
</dbReference>
<dbReference type="InterPro" id="IPR014726">
    <property type="entry name" value="Ribosomal_uL2_dom3"/>
</dbReference>
<dbReference type="InterPro" id="IPR022666">
    <property type="entry name" value="Ribosomal_uL2_RNA-bd_dom"/>
</dbReference>
<dbReference type="InterPro" id="IPR008991">
    <property type="entry name" value="Translation_prot_SH3-like_sf"/>
</dbReference>
<dbReference type="NCBIfam" id="TIGR01171">
    <property type="entry name" value="rplB_bact"/>
    <property type="match status" value="1"/>
</dbReference>
<dbReference type="PANTHER" id="PTHR13691:SF5">
    <property type="entry name" value="LARGE RIBOSOMAL SUBUNIT PROTEIN UL2M"/>
    <property type="match status" value="1"/>
</dbReference>
<dbReference type="PANTHER" id="PTHR13691">
    <property type="entry name" value="RIBOSOMAL PROTEIN L2"/>
    <property type="match status" value="1"/>
</dbReference>
<dbReference type="Pfam" id="PF00181">
    <property type="entry name" value="Ribosomal_L2"/>
    <property type="match status" value="1"/>
</dbReference>
<dbReference type="Pfam" id="PF03947">
    <property type="entry name" value="Ribosomal_L2_C"/>
    <property type="match status" value="1"/>
</dbReference>
<dbReference type="PIRSF" id="PIRSF002158">
    <property type="entry name" value="Ribosomal_L2"/>
    <property type="match status" value="1"/>
</dbReference>
<dbReference type="SMART" id="SM01383">
    <property type="entry name" value="Ribosomal_L2"/>
    <property type="match status" value="1"/>
</dbReference>
<dbReference type="SMART" id="SM01382">
    <property type="entry name" value="Ribosomal_L2_C"/>
    <property type="match status" value="1"/>
</dbReference>
<dbReference type="SUPFAM" id="SSF50249">
    <property type="entry name" value="Nucleic acid-binding proteins"/>
    <property type="match status" value="1"/>
</dbReference>
<dbReference type="SUPFAM" id="SSF50104">
    <property type="entry name" value="Translation proteins SH3-like domain"/>
    <property type="match status" value="1"/>
</dbReference>
<dbReference type="PROSITE" id="PS00467">
    <property type="entry name" value="RIBOSOMAL_L2"/>
    <property type="match status" value="1"/>
</dbReference>
<gene>
    <name evidence="1" type="primary">rplB</name>
    <name type="ordered locus">A1E_04355</name>
</gene>
<organism>
    <name type="scientific">Rickettsia canadensis (strain McKiel)</name>
    <dbReference type="NCBI Taxonomy" id="293613"/>
    <lineage>
        <taxon>Bacteria</taxon>
        <taxon>Pseudomonadati</taxon>
        <taxon>Pseudomonadota</taxon>
        <taxon>Alphaproteobacteria</taxon>
        <taxon>Rickettsiales</taxon>
        <taxon>Rickettsiaceae</taxon>
        <taxon>Rickettsieae</taxon>
        <taxon>Rickettsia</taxon>
        <taxon>belli group</taxon>
    </lineage>
</organism>
<comment type="function">
    <text evidence="1">One of the primary rRNA binding proteins. Required for association of the 30S and 50S subunits to form the 70S ribosome, for tRNA binding and peptide bond formation. It has been suggested to have peptidyltransferase activity; this is somewhat controversial. Makes several contacts with the 16S rRNA in the 70S ribosome.</text>
</comment>
<comment type="subunit">
    <text evidence="1">Part of the 50S ribosomal subunit. Forms a bridge to the 30S subunit in the 70S ribosome.</text>
</comment>
<comment type="similarity">
    <text evidence="1">Belongs to the universal ribosomal protein uL2 family.</text>
</comment>
<protein>
    <recommendedName>
        <fullName evidence="1">Large ribosomal subunit protein uL2</fullName>
    </recommendedName>
    <alternativeName>
        <fullName evidence="3">50S ribosomal protein L2</fullName>
    </alternativeName>
</protein>
<keyword id="KW-0687">Ribonucleoprotein</keyword>
<keyword id="KW-0689">Ribosomal protein</keyword>
<keyword id="KW-0694">RNA-binding</keyword>
<keyword id="KW-0699">rRNA-binding</keyword>